<comment type="function">
    <text evidence="1">Involved in protein export. Acts as a chaperone by maintaining the newly synthesized protein in an open conformation. Functions as a peptidyl-prolyl cis-trans isomerase.</text>
</comment>
<comment type="catalytic activity">
    <reaction evidence="1">
        <text>[protein]-peptidylproline (omega=180) = [protein]-peptidylproline (omega=0)</text>
        <dbReference type="Rhea" id="RHEA:16237"/>
        <dbReference type="Rhea" id="RHEA-COMP:10747"/>
        <dbReference type="Rhea" id="RHEA-COMP:10748"/>
        <dbReference type="ChEBI" id="CHEBI:83833"/>
        <dbReference type="ChEBI" id="CHEBI:83834"/>
        <dbReference type="EC" id="5.2.1.8"/>
    </reaction>
</comment>
<comment type="subcellular location">
    <subcellularLocation>
        <location>Cytoplasm</location>
    </subcellularLocation>
    <text evidence="1">About half TF is bound to the ribosome near the polypeptide exit tunnel while the other half is free in the cytoplasm.</text>
</comment>
<comment type="domain">
    <text evidence="1">Consists of 3 domains; the N-terminus binds the ribosome, the middle domain has PPIase activity, while the C-terminus has intrinsic chaperone activity on its own.</text>
</comment>
<comment type="similarity">
    <text evidence="1">Belongs to the FKBP-type PPIase family. Tig subfamily.</text>
</comment>
<feature type="chain" id="PRO_1000022711" description="Trigger factor">
    <location>
        <begin position="1"/>
        <end position="469"/>
    </location>
</feature>
<feature type="domain" description="PPIase FKBP-type" evidence="1">
    <location>
        <begin position="162"/>
        <end position="243"/>
    </location>
</feature>
<feature type="region of interest" description="Disordered" evidence="2">
    <location>
        <begin position="438"/>
        <end position="469"/>
    </location>
</feature>
<feature type="compositionally biased region" description="Acidic residues" evidence="2">
    <location>
        <begin position="444"/>
        <end position="469"/>
    </location>
</feature>
<evidence type="ECO:0000255" key="1">
    <source>
        <dbReference type="HAMAP-Rule" id="MF_00303"/>
    </source>
</evidence>
<evidence type="ECO:0000256" key="2">
    <source>
        <dbReference type="SAM" id="MobiDB-lite"/>
    </source>
</evidence>
<sequence>MKSTVEQLSPTRVRINVEVPFTELEPDFDRAFKELAKQVRLPGFRPGKAPRKLLEARIGRGAVLEQVVNDALPSRYSEAVSTSDLKPLGQPEIEITKLEDNEELVFTAEVDIRPEITLPELESLKITVDPIEVTDEEVDAELQSLRARFGTLKGVERGVQEGDFVSIDLSATVDGNEVPEAATEGLSHEVGSGQLIDGLDEAIIGLKADESKTFTTKLVAGEYAGQDAEVTVTVKSVKERELPEPDDEFAQLASEYDTIEELRNSLVDQVRRLKSVQQAEQIRDKAIEALLEQTEVPLPEKIVQAQIDEVVHNAIHGLDHDEEKFAEQLAEQGSSREEFDAETRTEAEKAVKTQLLMDAVADKLEIQVSQNDLTERLVLMSRQYGLEPQQLIQILQQNNQLPAMFADVRRGLTIAAVVHAATVTDTDGNVIDTMEFFGPSGEQAAEDSAEESTDAAEGEAAEDADDTDK</sequence>
<dbReference type="EC" id="5.2.1.8" evidence="1"/>
<dbReference type="EMBL" id="CP000480">
    <property type="protein sequence ID" value="ABK73897.1"/>
    <property type="molecule type" value="Genomic_DNA"/>
</dbReference>
<dbReference type="EMBL" id="CP001663">
    <property type="protein sequence ID" value="AFP41011.1"/>
    <property type="molecule type" value="Genomic_DNA"/>
</dbReference>
<dbReference type="RefSeq" id="WP_011730000.1">
    <property type="nucleotide sequence ID" value="NZ_SIJM01000004.1"/>
</dbReference>
<dbReference type="RefSeq" id="YP_888937.1">
    <property type="nucleotide sequence ID" value="NC_008596.1"/>
</dbReference>
<dbReference type="SMR" id="A0R199"/>
<dbReference type="STRING" id="246196.MSMEG_4674"/>
<dbReference type="PaxDb" id="246196-MSMEI_4557"/>
<dbReference type="GeneID" id="93459360"/>
<dbReference type="KEGG" id="msb:LJ00_23115"/>
<dbReference type="KEGG" id="msg:MSMEI_4557"/>
<dbReference type="KEGG" id="msm:MSMEG_4674"/>
<dbReference type="PATRIC" id="fig|246196.19.peg.4567"/>
<dbReference type="eggNOG" id="COG0544">
    <property type="taxonomic scope" value="Bacteria"/>
</dbReference>
<dbReference type="OrthoDB" id="9767721at2"/>
<dbReference type="Proteomes" id="UP000000757">
    <property type="component" value="Chromosome"/>
</dbReference>
<dbReference type="Proteomes" id="UP000006158">
    <property type="component" value="Chromosome"/>
</dbReference>
<dbReference type="GO" id="GO:0005737">
    <property type="term" value="C:cytoplasm"/>
    <property type="evidence" value="ECO:0007669"/>
    <property type="project" value="UniProtKB-SubCell"/>
</dbReference>
<dbReference type="GO" id="GO:0003755">
    <property type="term" value="F:peptidyl-prolyl cis-trans isomerase activity"/>
    <property type="evidence" value="ECO:0007669"/>
    <property type="project" value="UniProtKB-UniRule"/>
</dbReference>
<dbReference type="GO" id="GO:0044183">
    <property type="term" value="F:protein folding chaperone"/>
    <property type="evidence" value="ECO:0007669"/>
    <property type="project" value="TreeGrafter"/>
</dbReference>
<dbReference type="GO" id="GO:0043022">
    <property type="term" value="F:ribosome binding"/>
    <property type="evidence" value="ECO:0007669"/>
    <property type="project" value="TreeGrafter"/>
</dbReference>
<dbReference type="GO" id="GO:0051083">
    <property type="term" value="P:'de novo' cotranslational protein folding"/>
    <property type="evidence" value="ECO:0007669"/>
    <property type="project" value="TreeGrafter"/>
</dbReference>
<dbReference type="GO" id="GO:0051301">
    <property type="term" value="P:cell division"/>
    <property type="evidence" value="ECO:0007669"/>
    <property type="project" value="UniProtKB-KW"/>
</dbReference>
<dbReference type="GO" id="GO:0061077">
    <property type="term" value="P:chaperone-mediated protein folding"/>
    <property type="evidence" value="ECO:0007669"/>
    <property type="project" value="TreeGrafter"/>
</dbReference>
<dbReference type="GO" id="GO:0015031">
    <property type="term" value="P:protein transport"/>
    <property type="evidence" value="ECO:0007669"/>
    <property type="project" value="UniProtKB-UniRule"/>
</dbReference>
<dbReference type="GO" id="GO:0043335">
    <property type="term" value="P:protein unfolding"/>
    <property type="evidence" value="ECO:0007669"/>
    <property type="project" value="TreeGrafter"/>
</dbReference>
<dbReference type="FunFam" id="3.10.50.40:FF:000019">
    <property type="entry name" value="Trigger factor"/>
    <property type="match status" value="1"/>
</dbReference>
<dbReference type="Gene3D" id="3.10.50.40">
    <property type="match status" value="1"/>
</dbReference>
<dbReference type="Gene3D" id="3.30.70.1050">
    <property type="entry name" value="Trigger factor ribosome-binding domain"/>
    <property type="match status" value="1"/>
</dbReference>
<dbReference type="Gene3D" id="1.10.3120.10">
    <property type="entry name" value="Trigger factor, C-terminal domain"/>
    <property type="match status" value="1"/>
</dbReference>
<dbReference type="HAMAP" id="MF_00303">
    <property type="entry name" value="Trigger_factor_Tig"/>
    <property type="match status" value="1"/>
</dbReference>
<dbReference type="InterPro" id="IPR046357">
    <property type="entry name" value="PPIase_dom_sf"/>
</dbReference>
<dbReference type="InterPro" id="IPR001179">
    <property type="entry name" value="PPIase_FKBP_dom"/>
</dbReference>
<dbReference type="InterPro" id="IPR005215">
    <property type="entry name" value="Trig_fac"/>
</dbReference>
<dbReference type="InterPro" id="IPR008880">
    <property type="entry name" value="Trigger_fac_C"/>
</dbReference>
<dbReference type="InterPro" id="IPR037041">
    <property type="entry name" value="Trigger_fac_C_sf"/>
</dbReference>
<dbReference type="InterPro" id="IPR008881">
    <property type="entry name" value="Trigger_fac_ribosome-bd_bac"/>
</dbReference>
<dbReference type="InterPro" id="IPR036611">
    <property type="entry name" value="Trigger_fac_ribosome-bd_sf"/>
</dbReference>
<dbReference type="InterPro" id="IPR027304">
    <property type="entry name" value="Trigger_fact/SurA_dom_sf"/>
</dbReference>
<dbReference type="NCBIfam" id="TIGR00115">
    <property type="entry name" value="tig"/>
    <property type="match status" value="1"/>
</dbReference>
<dbReference type="PANTHER" id="PTHR30560">
    <property type="entry name" value="TRIGGER FACTOR CHAPERONE AND PEPTIDYL-PROLYL CIS/TRANS ISOMERASE"/>
    <property type="match status" value="1"/>
</dbReference>
<dbReference type="PANTHER" id="PTHR30560:SF3">
    <property type="entry name" value="TRIGGER FACTOR-LIKE PROTEIN TIG, CHLOROPLASTIC"/>
    <property type="match status" value="1"/>
</dbReference>
<dbReference type="Pfam" id="PF00254">
    <property type="entry name" value="FKBP_C"/>
    <property type="match status" value="1"/>
</dbReference>
<dbReference type="Pfam" id="PF05698">
    <property type="entry name" value="Trigger_C"/>
    <property type="match status" value="1"/>
</dbReference>
<dbReference type="Pfam" id="PF05697">
    <property type="entry name" value="Trigger_N"/>
    <property type="match status" value="1"/>
</dbReference>
<dbReference type="PIRSF" id="PIRSF003095">
    <property type="entry name" value="Trigger_factor"/>
    <property type="match status" value="1"/>
</dbReference>
<dbReference type="SUPFAM" id="SSF54534">
    <property type="entry name" value="FKBP-like"/>
    <property type="match status" value="1"/>
</dbReference>
<dbReference type="SUPFAM" id="SSF109998">
    <property type="entry name" value="Triger factor/SurA peptide-binding domain-like"/>
    <property type="match status" value="1"/>
</dbReference>
<dbReference type="SUPFAM" id="SSF102735">
    <property type="entry name" value="Trigger factor ribosome-binding domain"/>
    <property type="match status" value="1"/>
</dbReference>
<dbReference type="PROSITE" id="PS50059">
    <property type="entry name" value="FKBP_PPIASE"/>
    <property type="match status" value="1"/>
</dbReference>
<reference key="1">
    <citation type="submission" date="2006-10" db="EMBL/GenBank/DDBJ databases">
        <authorList>
            <person name="Fleischmann R.D."/>
            <person name="Dodson R.J."/>
            <person name="Haft D.H."/>
            <person name="Merkel J.S."/>
            <person name="Nelson W.C."/>
            <person name="Fraser C.M."/>
        </authorList>
    </citation>
    <scope>NUCLEOTIDE SEQUENCE [LARGE SCALE GENOMIC DNA]</scope>
    <source>
        <strain>ATCC 700084 / mc(2)155</strain>
    </source>
</reference>
<reference key="2">
    <citation type="journal article" date="2007" name="Genome Biol.">
        <title>Interrupted coding sequences in Mycobacterium smegmatis: authentic mutations or sequencing errors?</title>
        <authorList>
            <person name="Deshayes C."/>
            <person name="Perrodou E."/>
            <person name="Gallien S."/>
            <person name="Euphrasie D."/>
            <person name="Schaeffer C."/>
            <person name="Van-Dorsselaer A."/>
            <person name="Poch O."/>
            <person name="Lecompte O."/>
            <person name="Reyrat J.-M."/>
        </authorList>
    </citation>
    <scope>NUCLEOTIDE SEQUENCE [LARGE SCALE GENOMIC DNA]</scope>
    <source>
        <strain>ATCC 700084 / mc(2)155</strain>
    </source>
</reference>
<reference key="3">
    <citation type="journal article" date="2009" name="Genome Res.">
        <title>Ortho-proteogenomics: multiple proteomes investigation through orthology and a new MS-based protocol.</title>
        <authorList>
            <person name="Gallien S."/>
            <person name="Perrodou E."/>
            <person name="Carapito C."/>
            <person name="Deshayes C."/>
            <person name="Reyrat J.-M."/>
            <person name="Van Dorsselaer A."/>
            <person name="Poch O."/>
            <person name="Schaeffer C."/>
            <person name="Lecompte O."/>
        </authorList>
    </citation>
    <scope>NUCLEOTIDE SEQUENCE [LARGE SCALE GENOMIC DNA]</scope>
    <scope>IDENTIFICATION BY MASS SPECTROMETRY [LARGE SCALE ANALYSIS]</scope>
    <source>
        <strain>ATCC 700084 / mc(2)155</strain>
    </source>
</reference>
<keyword id="KW-0131">Cell cycle</keyword>
<keyword id="KW-0132">Cell division</keyword>
<keyword id="KW-0143">Chaperone</keyword>
<keyword id="KW-0963">Cytoplasm</keyword>
<keyword id="KW-0413">Isomerase</keyword>
<keyword id="KW-1185">Reference proteome</keyword>
<keyword id="KW-0697">Rotamase</keyword>
<gene>
    <name evidence="1" type="primary">tig</name>
    <name type="ordered locus">MSMEG_4674</name>
    <name type="ordered locus">MSMEI_4557</name>
</gene>
<proteinExistence type="evidence at protein level"/>
<organism>
    <name type="scientific">Mycolicibacterium smegmatis (strain ATCC 700084 / mc(2)155)</name>
    <name type="common">Mycobacterium smegmatis</name>
    <dbReference type="NCBI Taxonomy" id="246196"/>
    <lineage>
        <taxon>Bacteria</taxon>
        <taxon>Bacillati</taxon>
        <taxon>Actinomycetota</taxon>
        <taxon>Actinomycetes</taxon>
        <taxon>Mycobacteriales</taxon>
        <taxon>Mycobacteriaceae</taxon>
        <taxon>Mycolicibacterium</taxon>
    </lineage>
</organism>
<name>TIG_MYCS2</name>
<accession>A0R199</accession>
<accession>I7GCP0</accession>
<protein>
    <recommendedName>
        <fullName evidence="1">Trigger factor</fullName>
        <shortName evidence="1">TF</shortName>
        <ecNumber evidence="1">5.2.1.8</ecNumber>
    </recommendedName>
    <alternativeName>
        <fullName evidence="1">PPIase</fullName>
    </alternativeName>
</protein>